<sequence length="202" mass="21817">MKRIVILDYGLGNLRSVQKGLEHVGSSPAISGDPEEILAADGLILPGVGAFVDAMKCLDPIKGTIEEYARSGKPMLGICLGQQVLMSSSEEGKLTDGLDLISGKVLRFPKSELKVPHIGWNNIKIKQDHPLFEGIPDNSFVYFVHSFYVDTASENTLASCNYGLDFSASVVNSKGNVMGTQFHPEKSGAIGLKILKNFVDMC</sequence>
<name>HIS5_METBF</name>
<protein>
    <recommendedName>
        <fullName evidence="1">Imidazole glycerol phosphate synthase subunit HisH</fullName>
        <ecNumber evidence="1">4.3.2.10</ecNumber>
    </recommendedName>
    <alternativeName>
        <fullName evidence="1">IGP synthase glutaminase subunit</fullName>
        <ecNumber evidence="1">3.5.1.2</ecNumber>
    </alternativeName>
    <alternativeName>
        <fullName evidence="1">IGP synthase subunit HisH</fullName>
    </alternativeName>
    <alternativeName>
        <fullName evidence="1">ImGP synthase subunit HisH</fullName>
        <shortName evidence="1">IGPS subunit HisH</shortName>
    </alternativeName>
</protein>
<organism>
    <name type="scientific">Methanosarcina barkeri (strain Fusaro / DSM 804)</name>
    <dbReference type="NCBI Taxonomy" id="269797"/>
    <lineage>
        <taxon>Archaea</taxon>
        <taxon>Methanobacteriati</taxon>
        <taxon>Methanobacteriota</taxon>
        <taxon>Stenosarchaea group</taxon>
        <taxon>Methanomicrobia</taxon>
        <taxon>Methanosarcinales</taxon>
        <taxon>Methanosarcinaceae</taxon>
        <taxon>Methanosarcina</taxon>
    </lineage>
</organism>
<gene>
    <name evidence="1" type="primary">hisH</name>
    <name type="ordered locus">Mbar_A3476</name>
</gene>
<proteinExistence type="inferred from homology"/>
<comment type="function">
    <text evidence="1">IGPS catalyzes the conversion of PRFAR and glutamine to IGP, AICAR and glutamate. The HisH subunit catalyzes the hydrolysis of glutamine to glutamate and ammonia as part of the synthesis of IGP and AICAR. The resulting ammonia molecule is channeled to the active site of HisF.</text>
</comment>
<comment type="catalytic activity">
    <reaction evidence="1">
        <text>5-[(5-phospho-1-deoxy-D-ribulos-1-ylimino)methylamino]-1-(5-phospho-beta-D-ribosyl)imidazole-4-carboxamide + L-glutamine = D-erythro-1-(imidazol-4-yl)glycerol 3-phosphate + 5-amino-1-(5-phospho-beta-D-ribosyl)imidazole-4-carboxamide + L-glutamate + H(+)</text>
        <dbReference type="Rhea" id="RHEA:24793"/>
        <dbReference type="ChEBI" id="CHEBI:15378"/>
        <dbReference type="ChEBI" id="CHEBI:29985"/>
        <dbReference type="ChEBI" id="CHEBI:58278"/>
        <dbReference type="ChEBI" id="CHEBI:58359"/>
        <dbReference type="ChEBI" id="CHEBI:58475"/>
        <dbReference type="ChEBI" id="CHEBI:58525"/>
        <dbReference type="EC" id="4.3.2.10"/>
    </reaction>
</comment>
<comment type="catalytic activity">
    <reaction evidence="1">
        <text>L-glutamine + H2O = L-glutamate + NH4(+)</text>
        <dbReference type="Rhea" id="RHEA:15889"/>
        <dbReference type="ChEBI" id="CHEBI:15377"/>
        <dbReference type="ChEBI" id="CHEBI:28938"/>
        <dbReference type="ChEBI" id="CHEBI:29985"/>
        <dbReference type="ChEBI" id="CHEBI:58359"/>
        <dbReference type="EC" id="3.5.1.2"/>
    </reaction>
</comment>
<comment type="pathway">
    <text evidence="1">Amino-acid biosynthesis; L-histidine biosynthesis; L-histidine from 5-phospho-alpha-D-ribose 1-diphosphate: step 5/9.</text>
</comment>
<comment type="subunit">
    <text evidence="1">Heterodimer of HisH and HisF.</text>
</comment>
<comment type="subcellular location">
    <subcellularLocation>
        <location evidence="1">Cytoplasm</location>
    </subcellularLocation>
</comment>
<accession>Q465U3</accession>
<keyword id="KW-0028">Amino-acid biosynthesis</keyword>
<keyword id="KW-0963">Cytoplasm</keyword>
<keyword id="KW-0315">Glutamine amidotransferase</keyword>
<keyword id="KW-0368">Histidine biosynthesis</keyword>
<keyword id="KW-0378">Hydrolase</keyword>
<keyword id="KW-0456">Lyase</keyword>
<dbReference type="EC" id="4.3.2.10" evidence="1"/>
<dbReference type="EC" id="3.5.1.2" evidence="1"/>
<dbReference type="EMBL" id="CP000099">
    <property type="protein sequence ID" value="AAZ72349.1"/>
    <property type="molecule type" value="Genomic_DNA"/>
</dbReference>
<dbReference type="SMR" id="Q465U3"/>
<dbReference type="STRING" id="269797.Mbar_A3476"/>
<dbReference type="MEROPS" id="C26.965"/>
<dbReference type="PaxDb" id="269797-Mbar_A3476"/>
<dbReference type="KEGG" id="mba:Mbar_A3476"/>
<dbReference type="eggNOG" id="arCOG00089">
    <property type="taxonomic scope" value="Archaea"/>
</dbReference>
<dbReference type="HOGENOM" id="CLU_071837_2_2_2"/>
<dbReference type="OrthoDB" id="33401at2157"/>
<dbReference type="UniPathway" id="UPA00031">
    <property type="reaction ID" value="UER00010"/>
</dbReference>
<dbReference type="GO" id="GO:0005737">
    <property type="term" value="C:cytoplasm"/>
    <property type="evidence" value="ECO:0007669"/>
    <property type="project" value="UniProtKB-SubCell"/>
</dbReference>
<dbReference type="GO" id="GO:0004359">
    <property type="term" value="F:glutaminase activity"/>
    <property type="evidence" value="ECO:0007669"/>
    <property type="project" value="UniProtKB-EC"/>
</dbReference>
<dbReference type="GO" id="GO:0000107">
    <property type="term" value="F:imidazoleglycerol-phosphate synthase activity"/>
    <property type="evidence" value="ECO:0007669"/>
    <property type="project" value="UniProtKB-UniRule"/>
</dbReference>
<dbReference type="GO" id="GO:0016829">
    <property type="term" value="F:lyase activity"/>
    <property type="evidence" value="ECO:0007669"/>
    <property type="project" value="UniProtKB-KW"/>
</dbReference>
<dbReference type="GO" id="GO:0000105">
    <property type="term" value="P:L-histidine biosynthetic process"/>
    <property type="evidence" value="ECO:0007669"/>
    <property type="project" value="UniProtKB-UniRule"/>
</dbReference>
<dbReference type="CDD" id="cd01748">
    <property type="entry name" value="GATase1_IGP_Synthase"/>
    <property type="match status" value="1"/>
</dbReference>
<dbReference type="FunFam" id="3.40.50.880:FF:000009">
    <property type="entry name" value="Imidazole glycerol phosphate synthase subunit HisH"/>
    <property type="match status" value="1"/>
</dbReference>
<dbReference type="Gene3D" id="3.40.50.880">
    <property type="match status" value="1"/>
</dbReference>
<dbReference type="HAMAP" id="MF_00278">
    <property type="entry name" value="HisH"/>
    <property type="match status" value="1"/>
</dbReference>
<dbReference type="InterPro" id="IPR029062">
    <property type="entry name" value="Class_I_gatase-like"/>
</dbReference>
<dbReference type="InterPro" id="IPR017926">
    <property type="entry name" value="GATASE"/>
</dbReference>
<dbReference type="InterPro" id="IPR010139">
    <property type="entry name" value="Imidazole-glycPsynth_HisH"/>
</dbReference>
<dbReference type="NCBIfam" id="TIGR01855">
    <property type="entry name" value="IMP_synth_hisH"/>
    <property type="match status" value="1"/>
</dbReference>
<dbReference type="PANTHER" id="PTHR42701">
    <property type="entry name" value="IMIDAZOLE GLYCEROL PHOSPHATE SYNTHASE SUBUNIT HISH"/>
    <property type="match status" value="1"/>
</dbReference>
<dbReference type="PANTHER" id="PTHR42701:SF1">
    <property type="entry name" value="IMIDAZOLE GLYCEROL PHOSPHATE SYNTHASE SUBUNIT HISH"/>
    <property type="match status" value="1"/>
</dbReference>
<dbReference type="Pfam" id="PF00117">
    <property type="entry name" value="GATase"/>
    <property type="match status" value="1"/>
</dbReference>
<dbReference type="PIRSF" id="PIRSF000495">
    <property type="entry name" value="Amidotransf_hisH"/>
    <property type="match status" value="1"/>
</dbReference>
<dbReference type="SUPFAM" id="SSF52317">
    <property type="entry name" value="Class I glutamine amidotransferase-like"/>
    <property type="match status" value="1"/>
</dbReference>
<dbReference type="PROSITE" id="PS51273">
    <property type="entry name" value="GATASE_TYPE_1"/>
    <property type="match status" value="1"/>
</dbReference>
<evidence type="ECO:0000255" key="1">
    <source>
        <dbReference type="HAMAP-Rule" id="MF_00278"/>
    </source>
</evidence>
<feature type="chain" id="PRO_0000231775" description="Imidazole glycerol phosphate synthase subunit HisH">
    <location>
        <begin position="1"/>
        <end position="202"/>
    </location>
</feature>
<feature type="domain" description="Glutamine amidotransferase type-1" evidence="1">
    <location>
        <begin position="3"/>
        <end position="202"/>
    </location>
</feature>
<feature type="active site" description="Nucleophile" evidence="1">
    <location>
        <position position="79"/>
    </location>
</feature>
<feature type="active site" evidence="1">
    <location>
        <position position="183"/>
    </location>
</feature>
<feature type="active site" evidence="1">
    <location>
        <position position="185"/>
    </location>
</feature>
<reference key="1">
    <citation type="journal article" date="2006" name="J. Bacteriol.">
        <title>The Methanosarcina barkeri genome: comparative analysis with Methanosarcina acetivorans and Methanosarcina mazei reveals extensive rearrangement within methanosarcinal genomes.</title>
        <authorList>
            <person name="Maeder D.L."/>
            <person name="Anderson I."/>
            <person name="Brettin T.S."/>
            <person name="Bruce D.C."/>
            <person name="Gilna P."/>
            <person name="Han C.S."/>
            <person name="Lapidus A."/>
            <person name="Metcalf W.W."/>
            <person name="Saunders E."/>
            <person name="Tapia R."/>
            <person name="Sowers K.R."/>
        </authorList>
    </citation>
    <scope>NUCLEOTIDE SEQUENCE [LARGE SCALE GENOMIC DNA]</scope>
    <source>
        <strain>Fusaro / DSM 804</strain>
    </source>
</reference>